<accession>Q2TAL5</accession>
<accession>Q6ZVK6</accession>
<protein>
    <recommendedName>
        <fullName>Smoothelin-like protein 2</fullName>
    </recommendedName>
</protein>
<proteinExistence type="evidence at protein level"/>
<comment type="alternative products">
    <event type="alternative splicing"/>
    <isoform>
        <id>Q2TAL5-1</id>
        <name>1</name>
        <sequence type="displayed"/>
    </isoform>
    <isoform>
        <id>Q2TAL5-2</id>
        <name>2</name>
        <sequence type="described" ref="VSP_030931"/>
    </isoform>
</comment>
<comment type="similarity">
    <text evidence="9">Belongs to the smoothelin family.</text>
</comment>
<sequence length="461" mass="50196">MEPAPDAQEARTVREALGRYEAALEGAVRALHEDMRGLQRGVERRVAEAMRLAGPLARTVADLQRDNQRLQAQLERLTRQVEALGLASGMSPVPGTPGTPSPPPAPGVPDRAPRLGSARFASHATFSLSGRGQSLDHDEASESEMRKTSNSCIMENGHQPGAGPGDGPPEIAQNFSAPDPPRPRPVSLSLRLPHQPVTAITRVSDRFSGETSAAALSPMSAATLGGLNPSPSEVITPWTPSPSEKNSSFTWSVPSSGYGAVTASKHSNSPPLVTPPQSPVSPQPPAITQVHRQGERRRELVRSQTLPRTSEAQARKALFEKWEQETAAGKGKGEARARLKRSQSFGVASASSIKQILLEWCRSKTLGYQHVDLQNFSSSWSDGMAFCALVHSFFPDAFDYNSLSPTQRQKNFELAFTMAENLANCERLIEVEDMMVMGRKPDPMCVFTYVQSLYNHLRRFE</sequence>
<gene>
    <name type="primary">SMTNL2</name>
</gene>
<dbReference type="EMBL" id="AK124452">
    <property type="protein sequence ID" value="BAC85855.1"/>
    <property type="molecule type" value="mRNA"/>
</dbReference>
<dbReference type="EMBL" id="BC110859">
    <property type="protein sequence ID" value="AAI10860.1"/>
    <property type="molecule type" value="mRNA"/>
</dbReference>
<dbReference type="EMBL" id="BC105050">
    <property type="protein sequence ID" value="AAI05051.1"/>
    <property type="molecule type" value="mRNA"/>
</dbReference>
<dbReference type="EMBL" id="BC112177">
    <property type="protein sequence ID" value="AAI12178.1"/>
    <property type="molecule type" value="mRNA"/>
</dbReference>
<dbReference type="CCDS" id="CCDS11048.1">
    <molecule id="Q2TAL5-2"/>
</dbReference>
<dbReference type="CCDS" id="CCDS45583.1">
    <molecule id="Q2TAL5-1"/>
</dbReference>
<dbReference type="RefSeq" id="NP_001108446.1">
    <molecule id="Q2TAL5-1"/>
    <property type="nucleotide sequence ID" value="NM_001114974.2"/>
</dbReference>
<dbReference type="RefSeq" id="NP_940903.2">
    <molecule id="Q2TAL5-2"/>
    <property type="nucleotide sequence ID" value="NM_198501.3"/>
</dbReference>
<dbReference type="RefSeq" id="XP_006721578.1">
    <property type="nucleotide sequence ID" value="XM_006721515.2"/>
</dbReference>
<dbReference type="SMR" id="Q2TAL5"/>
<dbReference type="BioGRID" id="131181">
    <property type="interactions" value="38"/>
</dbReference>
<dbReference type="ELM" id="Q2TAL5"/>
<dbReference type="FunCoup" id="Q2TAL5">
    <property type="interactions" value="160"/>
</dbReference>
<dbReference type="IntAct" id="Q2TAL5">
    <property type="interactions" value="29"/>
</dbReference>
<dbReference type="MINT" id="Q2TAL5"/>
<dbReference type="STRING" id="9606.ENSP00000373964"/>
<dbReference type="GlyGen" id="Q2TAL5">
    <property type="glycosylation" value="6 sites, 1 O-linked glycan (3 sites)"/>
</dbReference>
<dbReference type="iPTMnet" id="Q2TAL5"/>
<dbReference type="PhosphoSitePlus" id="Q2TAL5"/>
<dbReference type="BioMuta" id="SMTNL2"/>
<dbReference type="DMDM" id="121941770"/>
<dbReference type="jPOST" id="Q2TAL5"/>
<dbReference type="MassIVE" id="Q2TAL5"/>
<dbReference type="PaxDb" id="9606-ENSP00000373964"/>
<dbReference type="PeptideAtlas" id="Q2TAL5"/>
<dbReference type="ProteomicsDB" id="61465">
    <molecule id="Q2TAL5-1"/>
</dbReference>
<dbReference type="ProteomicsDB" id="61466">
    <molecule id="Q2TAL5-2"/>
</dbReference>
<dbReference type="Antibodypedia" id="11245">
    <property type="antibodies" value="74 antibodies from 20 providers"/>
</dbReference>
<dbReference type="DNASU" id="342527"/>
<dbReference type="Ensembl" id="ENST00000338859.8">
    <molecule id="Q2TAL5-2"/>
    <property type="protein sequence ID" value="ENSP00000345143.4"/>
    <property type="gene ID" value="ENSG00000188176.12"/>
</dbReference>
<dbReference type="Ensembl" id="ENST00000389313.9">
    <molecule id="Q2TAL5-1"/>
    <property type="protein sequence ID" value="ENSP00000373964.4"/>
    <property type="gene ID" value="ENSG00000188176.12"/>
</dbReference>
<dbReference type="GeneID" id="342527"/>
<dbReference type="KEGG" id="hsa:342527"/>
<dbReference type="MANE-Select" id="ENST00000389313.9">
    <property type="protein sequence ID" value="ENSP00000373964.4"/>
    <property type="RefSeq nucleotide sequence ID" value="NM_001114974.2"/>
    <property type="RefSeq protein sequence ID" value="NP_001108446.1"/>
</dbReference>
<dbReference type="UCSC" id="uc002fye.3">
    <molecule id="Q2TAL5-1"/>
    <property type="organism name" value="human"/>
</dbReference>
<dbReference type="AGR" id="HGNC:24764"/>
<dbReference type="CTD" id="342527"/>
<dbReference type="DisGeNET" id="342527"/>
<dbReference type="GeneCards" id="SMTNL2"/>
<dbReference type="HGNC" id="HGNC:24764">
    <property type="gene designation" value="SMTNL2"/>
</dbReference>
<dbReference type="HPA" id="ENSG00000188176">
    <property type="expression patterns" value="Group enriched (skeletal muscle, tongue)"/>
</dbReference>
<dbReference type="neXtProt" id="NX_Q2TAL5"/>
<dbReference type="OpenTargets" id="ENSG00000188176"/>
<dbReference type="PharmGKB" id="PA145007828"/>
<dbReference type="VEuPathDB" id="HostDB:ENSG00000188176"/>
<dbReference type="eggNOG" id="KOG4678">
    <property type="taxonomic scope" value="Eukaryota"/>
</dbReference>
<dbReference type="GeneTree" id="ENSGT00940000154495"/>
<dbReference type="HOGENOM" id="CLU_040651_5_0_1"/>
<dbReference type="InParanoid" id="Q2TAL5"/>
<dbReference type="OMA" id="APHQGER"/>
<dbReference type="OrthoDB" id="21607at2759"/>
<dbReference type="PAN-GO" id="Q2TAL5">
    <property type="GO annotations" value="8 GO annotations based on evolutionary models"/>
</dbReference>
<dbReference type="PhylomeDB" id="Q2TAL5"/>
<dbReference type="TreeFam" id="TF316716"/>
<dbReference type="PathwayCommons" id="Q2TAL5"/>
<dbReference type="SignaLink" id="Q2TAL5"/>
<dbReference type="BioGRID-ORCS" id="342527">
    <property type="hits" value="13 hits in 1139 CRISPR screens"/>
</dbReference>
<dbReference type="ChiTaRS" id="SMTNL2">
    <property type="organism name" value="human"/>
</dbReference>
<dbReference type="GenomeRNAi" id="342527"/>
<dbReference type="Pharos" id="Q2TAL5">
    <property type="development level" value="Tdark"/>
</dbReference>
<dbReference type="PRO" id="PR:Q2TAL5"/>
<dbReference type="Proteomes" id="UP000005640">
    <property type="component" value="Chromosome 17"/>
</dbReference>
<dbReference type="RNAct" id="Q2TAL5">
    <property type="molecule type" value="protein"/>
</dbReference>
<dbReference type="Bgee" id="ENSG00000188176">
    <property type="expression patterns" value="Expressed in gastrocnemius and 124 other cell types or tissues"/>
</dbReference>
<dbReference type="ExpressionAtlas" id="Q2TAL5">
    <property type="expression patterns" value="baseline and differential"/>
</dbReference>
<dbReference type="CDD" id="cd21261">
    <property type="entry name" value="CH_SMTNL2"/>
    <property type="match status" value="1"/>
</dbReference>
<dbReference type="FunFam" id="1.10.418.10:FF:000009">
    <property type="entry name" value="smoothelin isoform X2"/>
    <property type="match status" value="1"/>
</dbReference>
<dbReference type="Gene3D" id="1.10.418.10">
    <property type="entry name" value="Calponin-like domain"/>
    <property type="match status" value="1"/>
</dbReference>
<dbReference type="InterPro" id="IPR001715">
    <property type="entry name" value="CH_dom"/>
</dbReference>
<dbReference type="InterPro" id="IPR036872">
    <property type="entry name" value="CH_dom_sf"/>
</dbReference>
<dbReference type="InterPro" id="IPR050540">
    <property type="entry name" value="F-actin_Monoox_Mical"/>
</dbReference>
<dbReference type="PANTHER" id="PTHR23167">
    <property type="entry name" value="CALPONIN HOMOLOGY DOMAIN-CONTAINING PROTEIN DDB_G0272472-RELATED"/>
    <property type="match status" value="1"/>
</dbReference>
<dbReference type="PANTHER" id="PTHR23167:SF37">
    <property type="entry name" value="SMOOTHELIN-LIKE PROTEIN 2"/>
    <property type="match status" value="1"/>
</dbReference>
<dbReference type="Pfam" id="PF00307">
    <property type="entry name" value="CH"/>
    <property type="match status" value="1"/>
</dbReference>
<dbReference type="SMART" id="SM00033">
    <property type="entry name" value="CH"/>
    <property type="match status" value="1"/>
</dbReference>
<dbReference type="SUPFAM" id="SSF47576">
    <property type="entry name" value="Calponin-homology domain, CH-domain"/>
    <property type="match status" value="1"/>
</dbReference>
<dbReference type="PROSITE" id="PS50021">
    <property type="entry name" value="CH"/>
    <property type="match status" value="1"/>
</dbReference>
<reference key="1">
    <citation type="journal article" date="2004" name="Nat. Genet.">
        <title>Complete sequencing and characterization of 21,243 full-length human cDNAs.</title>
        <authorList>
            <person name="Ota T."/>
            <person name="Suzuki Y."/>
            <person name="Nishikawa T."/>
            <person name="Otsuki T."/>
            <person name="Sugiyama T."/>
            <person name="Irie R."/>
            <person name="Wakamatsu A."/>
            <person name="Hayashi K."/>
            <person name="Sato H."/>
            <person name="Nagai K."/>
            <person name="Kimura K."/>
            <person name="Makita H."/>
            <person name="Sekine M."/>
            <person name="Obayashi M."/>
            <person name="Nishi T."/>
            <person name="Shibahara T."/>
            <person name="Tanaka T."/>
            <person name="Ishii S."/>
            <person name="Yamamoto J."/>
            <person name="Saito K."/>
            <person name="Kawai Y."/>
            <person name="Isono Y."/>
            <person name="Nakamura Y."/>
            <person name="Nagahari K."/>
            <person name="Murakami K."/>
            <person name="Yasuda T."/>
            <person name="Iwayanagi T."/>
            <person name="Wagatsuma M."/>
            <person name="Shiratori A."/>
            <person name="Sudo H."/>
            <person name="Hosoiri T."/>
            <person name="Kaku Y."/>
            <person name="Kodaira H."/>
            <person name="Kondo H."/>
            <person name="Sugawara M."/>
            <person name="Takahashi M."/>
            <person name="Kanda K."/>
            <person name="Yokoi T."/>
            <person name="Furuya T."/>
            <person name="Kikkawa E."/>
            <person name="Omura Y."/>
            <person name="Abe K."/>
            <person name="Kamihara K."/>
            <person name="Katsuta N."/>
            <person name="Sato K."/>
            <person name="Tanikawa M."/>
            <person name="Yamazaki M."/>
            <person name="Ninomiya K."/>
            <person name="Ishibashi T."/>
            <person name="Yamashita H."/>
            <person name="Murakawa K."/>
            <person name="Fujimori K."/>
            <person name="Tanai H."/>
            <person name="Kimata M."/>
            <person name="Watanabe M."/>
            <person name="Hiraoka S."/>
            <person name="Chiba Y."/>
            <person name="Ishida S."/>
            <person name="Ono Y."/>
            <person name="Takiguchi S."/>
            <person name="Watanabe S."/>
            <person name="Yosida M."/>
            <person name="Hotuta T."/>
            <person name="Kusano J."/>
            <person name="Kanehori K."/>
            <person name="Takahashi-Fujii A."/>
            <person name="Hara H."/>
            <person name="Tanase T.-O."/>
            <person name="Nomura Y."/>
            <person name="Togiya S."/>
            <person name="Komai F."/>
            <person name="Hara R."/>
            <person name="Takeuchi K."/>
            <person name="Arita M."/>
            <person name="Imose N."/>
            <person name="Musashino K."/>
            <person name="Yuuki H."/>
            <person name="Oshima A."/>
            <person name="Sasaki N."/>
            <person name="Aotsuka S."/>
            <person name="Yoshikawa Y."/>
            <person name="Matsunawa H."/>
            <person name="Ichihara T."/>
            <person name="Shiohata N."/>
            <person name="Sano S."/>
            <person name="Moriya S."/>
            <person name="Momiyama H."/>
            <person name="Satoh N."/>
            <person name="Takami S."/>
            <person name="Terashima Y."/>
            <person name="Suzuki O."/>
            <person name="Nakagawa S."/>
            <person name="Senoh A."/>
            <person name="Mizoguchi H."/>
            <person name="Goto Y."/>
            <person name="Shimizu F."/>
            <person name="Wakebe H."/>
            <person name="Hishigaki H."/>
            <person name="Watanabe T."/>
            <person name="Sugiyama A."/>
            <person name="Takemoto M."/>
            <person name="Kawakami B."/>
            <person name="Yamazaki M."/>
            <person name="Watanabe K."/>
            <person name="Kumagai A."/>
            <person name="Itakura S."/>
            <person name="Fukuzumi Y."/>
            <person name="Fujimori Y."/>
            <person name="Komiyama M."/>
            <person name="Tashiro H."/>
            <person name="Tanigami A."/>
            <person name="Fujiwara T."/>
            <person name="Ono T."/>
            <person name="Yamada K."/>
            <person name="Fujii Y."/>
            <person name="Ozaki K."/>
            <person name="Hirao M."/>
            <person name="Ohmori Y."/>
            <person name="Kawabata A."/>
            <person name="Hikiji T."/>
            <person name="Kobatake N."/>
            <person name="Inagaki H."/>
            <person name="Ikema Y."/>
            <person name="Okamoto S."/>
            <person name="Okitani R."/>
            <person name="Kawakami T."/>
            <person name="Noguchi S."/>
            <person name="Itoh T."/>
            <person name="Shigeta K."/>
            <person name="Senba T."/>
            <person name="Matsumura K."/>
            <person name="Nakajima Y."/>
            <person name="Mizuno T."/>
            <person name="Morinaga M."/>
            <person name="Sasaki M."/>
            <person name="Togashi T."/>
            <person name="Oyama M."/>
            <person name="Hata H."/>
            <person name="Watanabe M."/>
            <person name="Komatsu T."/>
            <person name="Mizushima-Sugano J."/>
            <person name="Satoh T."/>
            <person name="Shirai Y."/>
            <person name="Takahashi Y."/>
            <person name="Nakagawa K."/>
            <person name="Okumura K."/>
            <person name="Nagase T."/>
            <person name="Nomura N."/>
            <person name="Kikuchi H."/>
            <person name="Masuho Y."/>
            <person name="Yamashita R."/>
            <person name="Nakai K."/>
            <person name="Yada T."/>
            <person name="Nakamura Y."/>
            <person name="Ohara O."/>
            <person name="Isogai T."/>
            <person name="Sugano S."/>
        </authorList>
    </citation>
    <scope>NUCLEOTIDE SEQUENCE [LARGE SCALE MRNA] (ISOFORM 2)</scope>
    <scope>VARIANT THR-162</scope>
    <source>
        <tissue>Cerebellum</tissue>
    </source>
</reference>
<reference key="2">
    <citation type="journal article" date="2004" name="Genome Res.">
        <title>The status, quality, and expansion of the NIH full-length cDNA project: the Mammalian Gene Collection (MGC).</title>
        <authorList>
            <consortium name="The MGC Project Team"/>
        </authorList>
    </citation>
    <scope>NUCLEOTIDE SEQUENCE [LARGE SCALE MRNA] (ISOFORMS 1 AND 2)</scope>
    <scope>VARIANT THR-162</scope>
    <source>
        <tissue>Brain</tissue>
        <tissue>Colon</tissue>
    </source>
</reference>
<feature type="chain" id="PRO_0000317278" description="Smoothelin-like protein 2">
    <location>
        <begin position="1"/>
        <end position="461"/>
    </location>
</feature>
<feature type="domain" description="Calponin-homology (CH)" evidence="3">
    <location>
        <begin position="351"/>
        <end position="458"/>
    </location>
</feature>
<feature type="region of interest" description="Disordered" evidence="4">
    <location>
        <begin position="87"/>
        <end position="193"/>
    </location>
</feature>
<feature type="region of interest" description="Disordered" evidence="4">
    <location>
        <begin position="227"/>
        <end position="248"/>
    </location>
</feature>
<feature type="region of interest" description="Disordered" evidence="4">
    <location>
        <begin position="260"/>
        <end position="307"/>
    </location>
</feature>
<feature type="coiled-coil region" evidence="2">
    <location>
        <begin position="55"/>
        <end position="88"/>
    </location>
</feature>
<feature type="compositionally biased region" description="Pro residues" evidence="4">
    <location>
        <begin position="94"/>
        <end position="107"/>
    </location>
</feature>
<feature type="compositionally biased region" description="Basic and acidic residues" evidence="4">
    <location>
        <begin position="134"/>
        <end position="147"/>
    </location>
</feature>
<feature type="compositionally biased region" description="Pro residues" evidence="4">
    <location>
        <begin position="272"/>
        <end position="285"/>
    </location>
</feature>
<feature type="compositionally biased region" description="Basic and acidic residues" evidence="4">
    <location>
        <begin position="292"/>
        <end position="301"/>
    </location>
</feature>
<feature type="modified residue" description="Phosphothreonine" evidence="1">
    <location>
        <position position="96"/>
    </location>
</feature>
<feature type="modified residue" description="Phosphoserine" evidence="1">
    <location>
        <position position="101"/>
    </location>
</feature>
<feature type="modified residue" description="Phosphoserine" evidence="1">
    <location>
        <position position="129"/>
    </location>
</feature>
<feature type="modified residue" description="Phosphoserine" evidence="1">
    <location>
        <position position="134"/>
    </location>
</feature>
<feature type="modified residue" description="Phosphoserine" evidence="1">
    <location>
        <position position="256"/>
    </location>
</feature>
<feature type="modified residue" description="Phosphoserine" evidence="1">
    <location>
        <position position="269"/>
    </location>
</feature>
<feature type="modified residue" description="Phosphothreonine" evidence="1">
    <location>
        <position position="274"/>
    </location>
</feature>
<feature type="modified residue" description="Phosphoserine" evidence="1">
    <location>
        <position position="278"/>
    </location>
</feature>
<feature type="modified residue" description="Phosphoserine" evidence="1">
    <location>
        <position position="344"/>
    </location>
</feature>
<feature type="splice variant" id="VSP_030931" description="In isoform 2." evidence="7 8">
    <location>
        <begin position="1"/>
        <end position="144"/>
    </location>
</feature>
<feature type="sequence variant" id="VAR_038498" description="In dbSNP:rs12449695." evidence="5 6">
    <original>A</original>
    <variation>T</variation>
    <location>
        <position position="162"/>
    </location>
</feature>
<feature type="sequence variant" id="VAR_060164" description="In dbSNP:rs9916524.">
    <original>W</original>
    <variation>R</variation>
    <location>
        <position position="251"/>
    </location>
</feature>
<name>SMTL2_HUMAN</name>
<evidence type="ECO:0000250" key="1">
    <source>
        <dbReference type="UniProtKB" id="Q8CI12"/>
    </source>
</evidence>
<evidence type="ECO:0000255" key="2"/>
<evidence type="ECO:0000255" key="3">
    <source>
        <dbReference type="PROSITE-ProRule" id="PRU00044"/>
    </source>
</evidence>
<evidence type="ECO:0000256" key="4">
    <source>
        <dbReference type="SAM" id="MobiDB-lite"/>
    </source>
</evidence>
<evidence type="ECO:0000269" key="5">
    <source>
    </source>
</evidence>
<evidence type="ECO:0000269" key="6">
    <source>
    </source>
</evidence>
<evidence type="ECO:0000303" key="7">
    <source>
    </source>
</evidence>
<evidence type="ECO:0000303" key="8">
    <source>
    </source>
</evidence>
<evidence type="ECO:0000305" key="9"/>
<keyword id="KW-0025">Alternative splicing</keyword>
<keyword id="KW-0175">Coiled coil</keyword>
<keyword id="KW-0597">Phosphoprotein</keyword>
<keyword id="KW-1267">Proteomics identification</keyword>
<keyword id="KW-1185">Reference proteome</keyword>
<organism>
    <name type="scientific">Homo sapiens</name>
    <name type="common">Human</name>
    <dbReference type="NCBI Taxonomy" id="9606"/>
    <lineage>
        <taxon>Eukaryota</taxon>
        <taxon>Metazoa</taxon>
        <taxon>Chordata</taxon>
        <taxon>Craniata</taxon>
        <taxon>Vertebrata</taxon>
        <taxon>Euteleostomi</taxon>
        <taxon>Mammalia</taxon>
        <taxon>Eutheria</taxon>
        <taxon>Euarchontoglires</taxon>
        <taxon>Primates</taxon>
        <taxon>Haplorrhini</taxon>
        <taxon>Catarrhini</taxon>
        <taxon>Hominidae</taxon>
        <taxon>Homo</taxon>
    </lineage>
</organism>